<proteinExistence type="inferred from homology"/>
<protein>
    <recommendedName>
        <fullName evidence="1">ATP-dependent Clp protease adapter protein ClpS</fullName>
    </recommendedName>
</protein>
<organism>
    <name type="scientific">Leptothrix cholodnii (strain ATCC 51168 / LMG 8142 / SP-6)</name>
    <name type="common">Leptothrix discophora (strain SP-6)</name>
    <dbReference type="NCBI Taxonomy" id="395495"/>
    <lineage>
        <taxon>Bacteria</taxon>
        <taxon>Pseudomonadati</taxon>
        <taxon>Pseudomonadota</taxon>
        <taxon>Betaproteobacteria</taxon>
        <taxon>Burkholderiales</taxon>
        <taxon>Sphaerotilaceae</taxon>
        <taxon>Leptothrix</taxon>
    </lineage>
</organism>
<dbReference type="EMBL" id="CP001013">
    <property type="protein sequence ID" value="ACB33930.1"/>
    <property type="molecule type" value="Genomic_DNA"/>
</dbReference>
<dbReference type="RefSeq" id="WP_012346691.1">
    <property type="nucleotide sequence ID" value="NC_010524.1"/>
</dbReference>
<dbReference type="SMR" id="B1XY29"/>
<dbReference type="STRING" id="395495.Lcho_1663"/>
<dbReference type="KEGG" id="lch:Lcho_1663"/>
<dbReference type="eggNOG" id="COG2127">
    <property type="taxonomic scope" value="Bacteria"/>
</dbReference>
<dbReference type="HOGENOM" id="CLU_134358_2_1_4"/>
<dbReference type="OrthoDB" id="9796121at2"/>
<dbReference type="Proteomes" id="UP000001693">
    <property type="component" value="Chromosome"/>
</dbReference>
<dbReference type="GO" id="GO:0030163">
    <property type="term" value="P:protein catabolic process"/>
    <property type="evidence" value="ECO:0007669"/>
    <property type="project" value="InterPro"/>
</dbReference>
<dbReference type="GO" id="GO:0006508">
    <property type="term" value="P:proteolysis"/>
    <property type="evidence" value="ECO:0007669"/>
    <property type="project" value="UniProtKB-UniRule"/>
</dbReference>
<dbReference type="FunFam" id="3.30.1390.10:FF:000002">
    <property type="entry name" value="ATP-dependent Clp protease adapter protein ClpS"/>
    <property type="match status" value="1"/>
</dbReference>
<dbReference type="Gene3D" id="3.30.1390.10">
    <property type="match status" value="1"/>
</dbReference>
<dbReference type="HAMAP" id="MF_00302">
    <property type="entry name" value="ClpS"/>
    <property type="match status" value="1"/>
</dbReference>
<dbReference type="InterPro" id="IPR022935">
    <property type="entry name" value="ClpS"/>
</dbReference>
<dbReference type="InterPro" id="IPR003769">
    <property type="entry name" value="ClpS_core"/>
</dbReference>
<dbReference type="InterPro" id="IPR014719">
    <property type="entry name" value="Ribosomal_bL12_C/ClpS-like"/>
</dbReference>
<dbReference type="NCBIfam" id="NF000672">
    <property type="entry name" value="PRK00033.1-5"/>
    <property type="match status" value="1"/>
</dbReference>
<dbReference type="PANTHER" id="PTHR33473:SF19">
    <property type="entry name" value="ATP-DEPENDENT CLP PROTEASE ADAPTER PROTEIN CLPS"/>
    <property type="match status" value="1"/>
</dbReference>
<dbReference type="PANTHER" id="PTHR33473">
    <property type="entry name" value="ATP-DEPENDENT CLP PROTEASE ADAPTER PROTEIN CLPS1, CHLOROPLASTIC"/>
    <property type="match status" value="1"/>
</dbReference>
<dbReference type="Pfam" id="PF02617">
    <property type="entry name" value="ClpS"/>
    <property type="match status" value="1"/>
</dbReference>
<dbReference type="SUPFAM" id="SSF54736">
    <property type="entry name" value="ClpS-like"/>
    <property type="match status" value="1"/>
</dbReference>
<feature type="chain" id="PRO_1000115463" description="ATP-dependent Clp protease adapter protein ClpS">
    <location>
        <begin position="1"/>
        <end position="115"/>
    </location>
</feature>
<gene>
    <name evidence="1" type="primary">clpS</name>
    <name type="ordered locus">Lcho_1663</name>
</gene>
<accession>B1XY29</accession>
<sequence length="115" mass="12800">MSDQKPNTPNVPAPPDDGQGAVIAEKQLQRVEPPRVYQVVMLNDDFTPMEFVVMVLQQFFRHDLEAATQIMLKIHHEGRAVCGVYTQDVAATKVEMVQAAARRAGHPLQCTMEVA</sequence>
<reference key="1">
    <citation type="submission" date="2008-03" db="EMBL/GenBank/DDBJ databases">
        <title>Complete sequence of Leptothrix cholodnii SP-6.</title>
        <authorList>
            <consortium name="US DOE Joint Genome Institute"/>
            <person name="Copeland A."/>
            <person name="Lucas S."/>
            <person name="Lapidus A."/>
            <person name="Glavina del Rio T."/>
            <person name="Dalin E."/>
            <person name="Tice H."/>
            <person name="Bruce D."/>
            <person name="Goodwin L."/>
            <person name="Pitluck S."/>
            <person name="Chertkov O."/>
            <person name="Brettin T."/>
            <person name="Detter J.C."/>
            <person name="Han C."/>
            <person name="Kuske C.R."/>
            <person name="Schmutz J."/>
            <person name="Larimer F."/>
            <person name="Land M."/>
            <person name="Hauser L."/>
            <person name="Kyrpides N."/>
            <person name="Lykidis A."/>
            <person name="Emerson D."/>
            <person name="Richardson P."/>
        </authorList>
    </citation>
    <scope>NUCLEOTIDE SEQUENCE [LARGE SCALE GENOMIC DNA]</scope>
    <source>
        <strain>ATCC 51168 / LMG 8142 / SP-6</strain>
    </source>
</reference>
<keyword id="KW-1185">Reference proteome</keyword>
<comment type="function">
    <text evidence="1">Involved in the modulation of the specificity of the ClpAP-mediated ATP-dependent protein degradation.</text>
</comment>
<comment type="subunit">
    <text evidence="1">Binds to the N-terminal domain of the chaperone ClpA.</text>
</comment>
<comment type="similarity">
    <text evidence="1">Belongs to the ClpS family.</text>
</comment>
<name>CLPS_LEPCP</name>
<evidence type="ECO:0000255" key="1">
    <source>
        <dbReference type="HAMAP-Rule" id="MF_00302"/>
    </source>
</evidence>